<sequence length="461" mass="51912">MQRTQIVDALAATAPQPVIRLCGWVRTRRDAKGFSFLEINDGSCLANIQAIVDEGIPAYANIGAVSTGAAVDITGELVESPGKGQKWEVRVQTLTLLGAADAETYPLQKKRHSDEFLRSIAHLRARTNKYGAAFRIRSEAAFAIHEFYRERGFFYVHTPILTGSDCEGAGEMFRVTTLPVEGSATPASGNRYENDFFGKECNLTVSGQLEAETLALGLGKVYTFGPTFRAENSNTPRHAAEFWMIEPEVAFADLEEDMNLAEDMTRTVVRRILDRCAADLDLFNRFVDTTLVERLRQIADEPFARCSYTEAIELLLKSGKKFEYPVSFGLDLQTEHERYLAEEHFGKPVIVYNYPKEIKAFYMRLNDDGRTVAAMDVLVPRIGELIGGSQREERLDVLEARINEMGQNLEDYWWYLDLRRFGSVPHAGFGMGFERLLMLLTGITNIRDVIPFPRTPGNLEF</sequence>
<reference key="1">
    <citation type="journal article" date="2004" name="Nat. Biotechnol.">
        <title>The genome sequence of the anaerobic, sulfate-reducing bacterium Desulfovibrio vulgaris Hildenborough.</title>
        <authorList>
            <person name="Heidelberg J.F."/>
            <person name="Seshadri R."/>
            <person name="Haveman S.A."/>
            <person name="Hemme C.L."/>
            <person name="Paulsen I.T."/>
            <person name="Kolonay J.F."/>
            <person name="Eisen J.A."/>
            <person name="Ward N.L."/>
            <person name="Methe B.A."/>
            <person name="Brinkac L.M."/>
            <person name="Daugherty S.C."/>
            <person name="DeBoy R.T."/>
            <person name="Dodson R.J."/>
            <person name="Durkin A.S."/>
            <person name="Madupu R."/>
            <person name="Nelson W.C."/>
            <person name="Sullivan S.A."/>
            <person name="Fouts D.E."/>
            <person name="Haft D.H."/>
            <person name="Selengut J."/>
            <person name="Peterson J.D."/>
            <person name="Davidsen T.M."/>
            <person name="Zafar N."/>
            <person name="Zhou L."/>
            <person name="Radune D."/>
            <person name="Dimitrov G."/>
            <person name="Hance M."/>
            <person name="Tran K."/>
            <person name="Khouri H.M."/>
            <person name="Gill J."/>
            <person name="Utterback T.R."/>
            <person name="Feldblyum T.V."/>
            <person name="Wall J.D."/>
            <person name="Voordouw G."/>
            <person name="Fraser C.M."/>
        </authorList>
    </citation>
    <scope>NUCLEOTIDE SEQUENCE [LARGE SCALE GENOMIC DNA]</scope>
    <source>
        <strain>ATCC 29579 / DSM 644 / CCUG 34227 / NCIMB 8303 / VKM B-1760 / Hildenborough</strain>
    </source>
</reference>
<name>SYN_NITV2</name>
<gene>
    <name evidence="1" type="primary">asnS</name>
    <name type="ordered locus">DVU_0007</name>
</gene>
<dbReference type="EC" id="6.1.1.22" evidence="1"/>
<dbReference type="EMBL" id="AE017285">
    <property type="protein sequence ID" value="AAS94491.1"/>
    <property type="molecule type" value="Genomic_DNA"/>
</dbReference>
<dbReference type="RefSeq" id="WP_010937318.1">
    <property type="nucleotide sequence ID" value="NC_002937.3"/>
</dbReference>
<dbReference type="RefSeq" id="YP_009232.1">
    <property type="nucleotide sequence ID" value="NC_002937.3"/>
</dbReference>
<dbReference type="SMR" id="Q72G53"/>
<dbReference type="IntAct" id="Q72G53">
    <property type="interactions" value="1"/>
</dbReference>
<dbReference type="STRING" id="882.DVU_0007"/>
<dbReference type="PaxDb" id="882-DVU_0007"/>
<dbReference type="EnsemblBacteria" id="AAS94491">
    <property type="protein sequence ID" value="AAS94491"/>
    <property type="gene ID" value="DVU_0007"/>
</dbReference>
<dbReference type="KEGG" id="dvu:DVU_0007"/>
<dbReference type="PATRIC" id="fig|882.5.peg.7"/>
<dbReference type="eggNOG" id="COG0017">
    <property type="taxonomic scope" value="Bacteria"/>
</dbReference>
<dbReference type="HOGENOM" id="CLU_004553_2_0_7"/>
<dbReference type="OrthoDB" id="9802326at2"/>
<dbReference type="PhylomeDB" id="Q72G53"/>
<dbReference type="Proteomes" id="UP000002194">
    <property type="component" value="Chromosome"/>
</dbReference>
<dbReference type="GO" id="GO:0005737">
    <property type="term" value="C:cytoplasm"/>
    <property type="evidence" value="ECO:0007669"/>
    <property type="project" value="UniProtKB-SubCell"/>
</dbReference>
<dbReference type="GO" id="GO:0004816">
    <property type="term" value="F:asparagine-tRNA ligase activity"/>
    <property type="evidence" value="ECO:0007669"/>
    <property type="project" value="UniProtKB-UniRule"/>
</dbReference>
<dbReference type="GO" id="GO:0005524">
    <property type="term" value="F:ATP binding"/>
    <property type="evidence" value="ECO:0007669"/>
    <property type="project" value="UniProtKB-UniRule"/>
</dbReference>
<dbReference type="GO" id="GO:0003676">
    <property type="term" value="F:nucleic acid binding"/>
    <property type="evidence" value="ECO:0007669"/>
    <property type="project" value="InterPro"/>
</dbReference>
<dbReference type="GO" id="GO:0006421">
    <property type="term" value="P:asparaginyl-tRNA aminoacylation"/>
    <property type="evidence" value="ECO:0007669"/>
    <property type="project" value="UniProtKB-UniRule"/>
</dbReference>
<dbReference type="CDD" id="cd00776">
    <property type="entry name" value="AsxRS_core"/>
    <property type="match status" value="1"/>
</dbReference>
<dbReference type="CDD" id="cd04318">
    <property type="entry name" value="EcAsnRS_like_N"/>
    <property type="match status" value="1"/>
</dbReference>
<dbReference type="FunFam" id="3.30.930.10:FF:000016">
    <property type="entry name" value="Asparagine--tRNA ligase"/>
    <property type="match status" value="1"/>
</dbReference>
<dbReference type="Gene3D" id="3.30.930.10">
    <property type="entry name" value="Bira Bifunctional Protein, Domain 2"/>
    <property type="match status" value="1"/>
</dbReference>
<dbReference type="Gene3D" id="2.40.50.140">
    <property type="entry name" value="Nucleic acid-binding proteins"/>
    <property type="match status" value="1"/>
</dbReference>
<dbReference type="HAMAP" id="MF_00534">
    <property type="entry name" value="Asn_tRNA_synth"/>
    <property type="match status" value="1"/>
</dbReference>
<dbReference type="InterPro" id="IPR004364">
    <property type="entry name" value="Aa-tRNA-synt_II"/>
</dbReference>
<dbReference type="InterPro" id="IPR006195">
    <property type="entry name" value="aa-tRNA-synth_II"/>
</dbReference>
<dbReference type="InterPro" id="IPR045864">
    <property type="entry name" value="aa-tRNA-synth_II/BPL/LPL"/>
</dbReference>
<dbReference type="InterPro" id="IPR004522">
    <property type="entry name" value="Asn-tRNA-ligase"/>
</dbReference>
<dbReference type="InterPro" id="IPR002312">
    <property type="entry name" value="Asp/Asn-tRNA-synth_IIb"/>
</dbReference>
<dbReference type="InterPro" id="IPR012340">
    <property type="entry name" value="NA-bd_OB-fold"/>
</dbReference>
<dbReference type="InterPro" id="IPR004365">
    <property type="entry name" value="NA-bd_OB_tRNA"/>
</dbReference>
<dbReference type="NCBIfam" id="TIGR00457">
    <property type="entry name" value="asnS"/>
    <property type="match status" value="1"/>
</dbReference>
<dbReference type="NCBIfam" id="NF003037">
    <property type="entry name" value="PRK03932.1"/>
    <property type="match status" value="1"/>
</dbReference>
<dbReference type="PANTHER" id="PTHR22594:SF34">
    <property type="entry name" value="ASPARAGINE--TRNA LIGASE, MITOCHONDRIAL-RELATED"/>
    <property type="match status" value="1"/>
</dbReference>
<dbReference type="PANTHER" id="PTHR22594">
    <property type="entry name" value="ASPARTYL/LYSYL-TRNA SYNTHETASE"/>
    <property type="match status" value="1"/>
</dbReference>
<dbReference type="Pfam" id="PF00152">
    <property type="entry name" value="tRNA-synt_2"/>
    <property type="match status" value="1"/>
</dbReference>
<dbReference type="Pfam" id="PF01336">
    <property type="entry name" value="tRNA_anti-codon"/>
    <property type="match status" value="1"/>
</dbReference>
<dbReference type="PRINTS" id="PR01042">
    <property type="entry name" value="TRNASYNTHASP"/>
</dbReference>
<dbReference type="SUPFAM" id="SSF55681">
    <property type="entry name" value="Class II aaRS and biotin synthetases"/>
    <property type="match status" value="1"/>
</dbReference>
<dbReference type="SUPFAM" id="SSF50249">
    <property type="entry name" value="Nucleic acid-binding proteins"/>
    <property type="match status" value="1"/>
</dbReference>
<dbReference type="PROSITE" id="PS50862">
    <property type="entry name" value="AA_TRNA_LIGASE_II"/>
    <property type="match status" value="1"/>
</dbReference>
<keyword id="KW-0030">Aminoacyl-tRNA synthetase</keyword>
<keyword id="KW-0067">ATP-binding</keyword>
<keyword id="KW-0963">Cytoplasm</keyword>
<keyword id="KW-0436">Ligase</keyword>
<keyword id="KW-0547">Nucleotide-binding</keyword>
<keyword id="KW-0648">Protein biosynthesis</keyword>
<keyword id="KW-1185">Reference proteome</keyword>
<comment type="catalytic activity">
    <reaction evidence="1">
        <text>tRNA(Asn) + L-asparagine + ATP = L-asparaginyl-tRNA(Asn) + AMP + diphosphate + H(+)</text>
        <dbReference type="Rhea" id="RHEA:11180"/>
        <dbReference type="Rhea" id="RHEA-COMP:9659"/>
        <dbReference type="Rhea" id="RHEA-COMP:9674"/>
        <dbReference type="ChEBI" id="CHEBI:15378"/>
        <dbReference type="ChEBI" id="CHEBI:30616"/>
        <dbReference type="ChEBI" id="CHEBI:33019"/>
        <dbReference type="ChEBI" id="CHEBI:58048"/>
        <dbReference type="ChEBI" id="CHEBI:78442"/>
        <dbReference type="ChEBI" id="CHEBI:78515"/>
        <dbReference type="ChEBI" id="CHEBI:456215"/>
        <dbReference type="EC" id="6.1.1.22"/>
    </reaction>
</comment>
<comment type="subunit">
    <text evidence="1">Homodimer.</text>
</comment>
<comment type="subcellular location">
    <subcellularLocation>
        <location evidence="1">Cytoplasm</location>
    </subcellularLocation>
</comment>
<comment type="similarity">
    <text evidence="1">Belongs to the class-II aminoacyl-tRNA synthetase family.</text>
</comment>
<evidence type="ECO:0000255" key="1">
    <source>
        <dbReference type="HAMAP-Rule" id="MF_00534"/>
    </source>
</evidence>
<feature type="chain" id="PRO_0000176405" description="Asparagine--tRNA ligase">
    <location>
        <begin position="1"/>
        <end position="461"/>
    </location>
</feature>
<protein>
    <recommendedName>
        <fullName evidence="1">Asparagine--tRNA ligase</fullName>
        <ecNumber evidence="1">6.1.1.22</ecNumber>
    </recommendedName>
    <alternativeName>
        <fullName evidence="1">Asparaginyl-tRNA synthetase</fullName>
        <shortName evidence="1">AsnRS</shortName>
    </alternativeName>
</protein>
<accession>Q72G53</accession>
<proteinExistence type="inferred from homology"/>
<organism>
    <name type="scientific">Nitratidesulfovibrio vulgaris (strain ATCC 29579 / DSM 644 / CCUG 34227 / NCIMB 8303 / VKM B-1760 / Hildenborough)</name>
    <name type="common">Desulfovibrio vulgaris</name>
    <dbReference type="NCBI Taxonomy" id="882"/>
    <lineage>
        <taxon>Bacteria</taxon>
        <taxon>Pseudomonadati</taxon>
        <taxon>Thermodesulfobacteriota</taxon>
        <taxon>Desulfovibrionia</taxon>
        <taxon>Desulfovibrionales</taxon>
        <taxon>Desulfovibrionaceae</taxon>
        <taxon>Nitratidesulfovibrio</taxon>
    </lineage>
</organism>